<comment type="catalytic activity">
    <reaction evidence="1">
        <text>oxaloacetate + acetyl-CoA + H2O = citrate + CoA + H(+)</text>
        <dbReference type="Rhea" id="RHEA:16845"/>
        <dbReference type="ChEBI" id="CHEBI:15377"/>
        <dbReference type="ChEBI" id="CHEBI:15378"/>
        <dbReference type="ChEBI" id="CHEBI:16452"/>
        <dbReference type="ChEBI" id="CHEBI:16947"/>
        <dbReference type="ChEBI" id="CHEBI:57287"/>
        <dbReference type="ChEBI" id="CHEBI:57288"/>
        <dbReference type="EC" id="2.3.3.16"/>
    </reaction>
</comment>
<comment type="pathway">
    <text>Carbohydrate metabolism; tricarboxylic acid cycle; isocitrate from oxaloacetate: step 1/2.</text>
</comment>
<comment type="miscellaneous">
    <text>Citrate synthase is found in nearly all cells capable of oxidative metabolism.</text>
</comment>
<comment type="similarity">
    <text evidence="2">Belongs to the citrate synthase family.</text>
</comment>
<reference key="1">
    <citation type="submission" date="1995-05" db="EMBL/GenBank/DDBJ databases">
        <authorList>
            <person name="Jones D.C."/>
            <person name="Regnery R."/>
            <person name="Bowen M."/>
        </authorList>
    </citation>
    <scope>NUCLEOTIDE SEQUENCE [GENOMIC DNA]</scope>
</reference>
<gene>
    <name type="primary">gltA</name>
</gene>
<name>CISY_BARVB</name>
<protein>
    <recommendedName>
        <fullName>Citrate synthase</fullName>
        <ecNumber>2.3.3.16</ecNumber>
    </recommendedName>
</protein>
<evidence type="ECO:0000255" key="1">
    <source>
        <dbReference type="PROSITE-ProRule" id="PRU10117"/>
    </source>
</evidence>
<evidence type="ECO:0000305" key="2"/>
<organism>
    <name type="scientific">Bartonella vinsonii subsp. berkhoffii</name>
    <dbReference type="NCBI Taxonomy" id="40933"/>
    <lineage>
        <taxon>Bacteria</taxon>
        <taxon>Pseudomonadati</taxon>
        <taxon>Pseudomonadota</taxon>
        <taxon>Alphaproteobacteria</taxon>
        <taxon>Hyphomicrobiales</taxon>
        <taxon>Bartonellaceae</taxon>
        <taxon>Bartonella</taxon>
    </lineage>
</organism>
<dbReference type="EC" id="2.3.3.16"/>
<dbReference type="EMBL" id="U28075">
    <property type="protein sequence ID" value="AAA74980.1"/>
    <property type="molecule type" value="Genomic_DNA"/>
</dbReference>
<dbReference type="SMR" id="P51035"/>
<dbReference type="UniPathway" id="UPA00223">
    <property type="reaction ID" value="UER00717"/>
</dbReference>
<dbReference type="GO" id="GO:0036440">
    <property type="term" value="F:citrate synthase activity"/>
    <property type="evidence" value="ECO:0007669"/>
    <property type="project" value="UniProtKB-EC"/>
</dbReference>
<dbReference type="GO" id="GO:0006099">
    <property type="term" value="P:tricarboxylic acid cycle"/>
    <property type="evidence" value="ECO:0007669"/>
    <property type="project" value="UniProtKB-UniPathway"/>
</dbReference>
<dbReference type="FunFam" id="1.10.230.10:FF:000002">
    <property type="entry name" value="Citrate synthase"/>
    <property type="match status" value="1"/>
</dbReference>
<dbReference type="Gene3D" id="1.10.230.10">
    <property type="entry name" value="Cytochrome P450-Terp, domain 2"/>
    <property type="match status" value="1"/>
</dbReference>
<dbReference type="InterPro" id="IPR016143">
    <property type="entry name" value="Citrate_synth-like_sm_a-sub"/>
</dbReference>
<dbReference type="InterPro" id="IPR002020">
    <property type="entry name" value="Citrate_synthase"/>
</dbReference>
<dbReference type="InterPro" id="IPR019810">
    <property type="entry name" value="Citrate_synthase_AS"/>
</dbReference>
<dbReference type="InterPro" id="IPR036969">
    <property type="entry name" value="Citrate_synthase_sf"/>
</dbReference>
<dbReference type="PANTHER" id="PTHR42871">
    <property type="entry name" value="CITRATE SYNTHASE"/>
    <property type="match status" value="1"/>
</dbReference>
<dbReference type="PANTHER" id="PTHR42871:SF1">
    <property type="entry name" value="CITRATE SYNTHASE"/>
    <property type="match status" value="1"/>
</dbReference>
<dbReference type="Pfam" id="PF00285">
    <property type="entry name" value="Citrate_synt"/>
    <property type="match status" value="1"/>
</dbReference>
<dbReference type="PRINTS" id="PR00143">
    <property type="entry name" value="CITRTSNTHASE"/>
</dbReference>
<dbReference type="SUPFAM" id="SSF48256">
    <property type="entry name" value="Citrate synthase"/>
    <property type="match status" value="1"/>
</dbReference>
<dbReference type="PROSITE" id="PS00480">
    <property type="entry name" value="CITRATE_SYNTHASE"/>
    <property type="match status" value="1"/>
</dbReference>
<proteinExistence type="inferred from homology"/>
<feature type="chain" id="PRO_0000169937" description="Citrate synthase">
    <location>
        <begin position="1" status="less than"/>
        <end position="112" status="greater than"/>
    </location>
</feature>
<feature type="active site" evidence="1">
    <location>
        <position position="39"/>
    </location>
</feature>
<feature type="active site" evidence="1">
    <location>
        <position position="97"/>
    </location>
</feature>
<feature type="non-terminal residue">
    <location>
        <position position="1"/>
    </location>
</feature>
<feature type="non-terminal residue">
    <location>
        <position position="112"/>
    </location>
</feature>
<keyword id="KW-0808">Transferase</keyword>
<keyword id="KW-0816">Tricarboxylic acid cycle</keyword>
<sequence length="112" mass="12961">ANEACLKMLLEIGSVKRIPEFIARAKDKNDPFRLMGFGHRVYKNYDPRAKIMQKTCHEVLKELNIQNDPLLDIAIELEKIALNDEYFVEKKLYPNVDFYSGITLKALGFPTE</sequence>
<accession>P51035</accession>